<protein>
    <recommendedName>
        <fullName evidence="1">Ribosomal protein L11 methyltransferase</fullName>
        <shortName evidence="1">L11 Mtase</shortName>
        <ecNumber evidence="1">2.1.1.-</ecNumber>
    </recommendedName>
</protein>
<feature type="chain" id="PRO_0000192317" description="Ribosomal protein L11 methyltransferase">
    <location>
        <begin position="1"/>
        <end position="316"/>
    </location>
</feature>
<feature type="binding site" evidence="1">
    <location>
        <position position="157"/>
    </location>
    <ligand>
        <name>S-adenosyl-L-methionine</name>
        <dbReference type="ChEBI" id="CHEBI:59789"/>
    </ligand>
</feature>
<feature type="binding site" evidence="1">
    <location>
        <position position="178"/>
    </location>
    <ligand>
        <name>S-adenosyl-L-methionine</name>
        <dbReference type="ChEBI" id="CHEBI:59789"/>
    </ligand>
</feature>
<feature type="binding site" evidence="1">
    <location>
        <position position="200"/>
    </location>
    <ligand>
        <name>S-adenosyl-L-methionine</name>
        <dbReference type="ChEBI" id="CHEBI:59789"/>
    </ligand>
</feature>
<feature type="binding site" evidence="1">
    <location>
        <position position="243"/>
    </location>
    <ligand>
        <name>S-adenosyl-L-methionine</name>
        <dbReference type="ChEBI" id="CHEBI:59789"/>
    </ligand>
</feature>
<evidence type="ECO:0000255" key="1">
    <source>
        <dbReference type="HAMAP-Rule" id="MF_00735"/>
    </source>
</evidence>
<evidence type="ECO:0000305" key="2"/>
<reference key="1">
    <citation type="journal article" date="2001" name="J. Bacteriol.">
        <title>Genome of the bacterium Streptococcus pneumoniae strain R6.</title>
        <authorList>
            <person name="Hoskins J."/>
            <person name="Alborn W.E. Jr."/>
            <person name="Arnold J."/>
            <person name="Blaszczak L.C."/>
            <person name="Burgett S."/>
            <person name="DeHoff B.S."/>
            <person name="Estrem S.T."/>
            <person name="Fritz L."/>
            <person name="Fu D.-J."/>
            <person name="Fuller W."/>
            <person name="Geringer C."/>
            <person name="Gilmour R."/>
            <person name="Glass J.S."/>
            <person name="Khoja H."/>
            <person name="Kraft A.R."/>
            <person name="Lagace R.E."/>
            <person name="LeBlanc D.J."/>
            <person name="Lee L.N."/>
            <person name="Lefkowitz E.J."/>
            <person name="Lu J."/>
            <person name="Matsushima P."/>
            <person name="McAhren S.M."/>
            <person name="McHenney M."/>
            <person name="McLeaster K."/>
            <person name="Mundy C.W."/>
            <person name="Nicas T.I."/>
            <person name="Norris F.H."/>
            <person name="O'Gara M."/>
            <person name="Peery R.B."/>
            <person name="Robertson G.T."/>
            <person name="Rockey P."/>
            <person name="Sun P.-M."/>
            <person name="Winkler M.E."/>
            <person name="Yang Y."/>
            <person name="Young-Bellido M."/>
            <person name="Zhao G."/>
            <person name="Zook C.A."/>
            <person name="Baltz R.H."/>
            <person name="Jaskunas S.R."/>
            <person name="Rosteck P.R. Jr."/>
            <person name="Skatrud P.L."/>
            <person name="Glass J.I."/>
        </authorList>
    </citation>
    <scope>NUCLEOTIDE SEQUENCE [LARGE SCALE GENOMIC DNA]</scope>
    <source>
        <strain>ATCC BAA-255 / R6</strain>
    </source>
</reference>
<name>PRMA_STRR6</name>
<organism>
    <name type="scientific">Streptococcus pneumoniae (strain ATCC BAA-255 / R6)</name>
    <dbReference type="NCBI Taxonomy" id="171101"/>
    <lineage>
        <taxon>Bacteria</taxon>
        <taxon>Bacillati</taxon>
        <taxon>Bacillota</taxon>
        <taxon>Bacilli</taxon>
        <taxon>Lactobacillales</taxon>
        <taxon>Streptococcaceae</taxon>
        <taxon>Streptococcus</taxon>
    </lineage>
</organism>
<comment type="function">
    <text evidence="1">Methylates ribosomal protein L11.</text>
</comment>
<comment type="catalytic activity">
    <reaction evidence="1">
        <text>L-lysyl-[protein] + 3 S-adenosyl-L-methionine = N(6),N(6),N(6)-trimethyl-L-lysyl-[protein] + 3 S-adenosyl-L-homocysteine + 3 H(+)</text>
        <dbReference type="Rhea" id="RHEA:54192"/>
        <dbReference type="Rhea" id="RHEA-COMP:9752"/>
        <dbReference type="Rhea" id="RHEA-COMP:13826"/>
        <dbReference type="ChEBI" id="CHEBI:15378"/>
        <dbReference type="ChEBI" id="CHEBI:29969"/>
        <dbReference type="ChEBI" id="CHEBI:57856"/>
        <dbReference type="ChEBI" id="CHEBI:59789"/>
        <dbReference type="ChEBI" id="CHEBI:61961"/>
    </reaction>
</comment>
<comment type="subcellular location">
    <subcellularLocation>
        <location evidence="1">Cytoplasm</location>
    </subcellularLocation>
</comment>
<comment type="similarity">
    <text evidence="1">Belongs to the methyltransferase superfamily. PrmA family.</text>
</comment>
<comment type="sequence caution" evidence="2">
    <conflict type="erroneous initiation">
        <sequence resource="EMBL-CDS" id="AAL00411"/>
    </conflict>
</comment>
<keyword id="KW-0963">Cytoplasm</keyword>
<keyword id="KW-0489">Methyltransferase</keyword>
<keyword id="KW-1185">Reference proteome</keyword>
<keyword id="KW-0949">S-adenosyl-L-methionine</keyword>
<keyword id="KW-0808">Transferase</keyword>
<accession>Q8DNP4</accession>
<gene>
    <name evidence="1" type="primary">prmA</name>
    <name type="ordered locus">spr1608</name>
</gene>
<dbReference type="EC" id="2.1.1.-" evidence="1"/>
<dbReference type="EMBL" id="AE007317">
    <property type="protein sequence ID" value="AAL00411.1"/>
    <property type="status" value="ALT_INIT"/>
    <property type="molecule type" value="Genomic_DNA"/>
</dbReference>
<dbReference type="PIR" id="F98072">
    <property type="entry name" value="F98072"/>
</dbReference>
<dbReference type="RefSeq" id="NP_359200.2">
    <property type="nucleotide sequence ID" value="NC_003098.1"/>
</dbReference>
<dbReference type="RefSeq" id="WP_000451131.1">
    <property type="nucleotide sequence ID" value="NC_003098.1"/>
</dbReference>
<dbReference type="SMR" id="Q8DNP4"/>
<dbReference type="STRING" id="171101.spr1608"/>
<dbReference type="KEGG" id="spr:spr1608"/>
<dbReference type="PATRIC" id="fig|171101.6.peg.1737"/>
<dbReference type="eggNOG" id="COG2264">
    <property type="taxonomic scope" value="Bacteria"/>
</dbReference>
<dbReference type="HOGENOM" id="CLU_049382_0_1_9"/>
<dbReference type="Proteomes" id="UP000000586">
    <property type="component" value="Chromosome"/>
</dbReference>
<dbReference type="GO" id="GO:0005737">
    <property type="term" value="C:cytoplasm"/>
    <property type="evidence" value="ECO:0007669"/>
    <property type="project" value="UniProtKB-SubCell"/>
</dbReference>
<dbReference type="GO" id="GO:0008276">
    <property type="term" value="F:protein methyltransferase activity"/>
    <property type="evidence" value="ECO:0000318"/>
    <property type="project" value="GO_Central"/>
</dbReference>
<dbReference type="GO" id="GO:0016279">
    <property type="term" value="F:protein-lysine N-methyltransferase activity"/>
    <property type="evidence" value="ECO:0007669"/>
    <property type="project" value="RHEA"/>
</dbReference>
<dbReference type="GO" id="GO:0032259">
    <property type="term" value="P:methylation"/>
    <property type="evidence" value="ECO:0007669"/>
    <property type="project" value="UniProtKB-KW"/>
</dbReference>
<dbReference type="CDD" id="cd02440">
    <property type="entry name" value="AdoMet_MTases"/>
    <property type="match status" value="1"/>
</dbReference>
<dbReference type="Gene3D" id="3.40.50.150">
    <property type="entry name" value="Vaccinia Virus protein VP39"/>
    <property type="match status" value="1"/>
</dbReference>
<dbReference type="HAMAP" id="MF_00735">
    <property type="entry name" value="Methyltr_PrmA"/>
    <property type="match status" value="1"/>
</dbReference>
<dbReference type="InterPro" id="IPR050078">
    <property type="entry name" value="Ribosomal_L11_MeTrfase_PrmA"/>
</dbReference>
<dbReference type="InterPro" id="IPR004498">
    <property type="entry name" value="Ribosomal_PrmA_MeTrfase"/>
</dbReference>
<dbReference type="InterPro" id="IPR029063">
    <property type="entry name" value="SAM-dependent_MTases_sf"/>
</dbReference>
<dbReference type="NCBIfam" id="TIGR00406">
    <property type="entry name" value="prmA"/>
    <property type="match status" value="1"/>
</dbReference>
<dbReference type="PANTHER" id="PTHR43648">
    <property type="entry name" value="ELECTRON TRANSFER FLAVOPROTEIN BETA SUBUNIT LYSINE METHYLTRANSFERASE"/>
    <property type="match status" value="1"/>
</dbReference>
<dbReference type="PANTHER" id="PTHR43648:SF1">
    <property type="entry name" value="ELECTRON TRANSFER FLAVOPROTEIN BETA SUBUNIT LYSINE METHYLTRANSFERASE"/>
    <property type="match status" value="1"/>
</dbReference>
<dbReference type="Pfam" id="PF06325">
    <property type="entry name" value="PrmA"/>
    <property type="match status" value="1"/>
</dbReference>
<dbReference type="PIRSF" id="PIRSF000401">
    <property type="entry name" value="RPL11_MTase"/>
    <property type="match status" value="1"/>
</dbReference>
<dbReference type="SUPFAM" id="SSF53335">
    <property type="entry name" value="S-adenosyl-L-methionine-dependent methyltransferases"/>
    <property type="match status" value="1"/>
</dbReference>
<sequence>METWQELKVTVKREGEELVSNLLIELGAQGVAIEDSMDYMGNVDRFGEIFPEVEQQEEIVVTAYYPDTVDVTVVEADLQARLAELTDFMDLGEVKMGTTALAEEDWADNWKKYYEPARITHDLTIVPSWTDYEATAGEKIIKLDPGMAFGTGTHPTTKMSLFALEQVLRGGETVLDVGTGSGVLSIASSLLGAKEIFAYDLDDVAVRVAQENIELNPGMENIHVAAGDLLKGVEIEADVIVANILADILIHLTDDAYRLVKDEGYLIMSGIIKDKWDMVRESAESAGFFLETHMVQGEWNACVFKKTKDISGVIGG</sequence>
<proteinExistence type="inferred from homology"/>